<comment type="function">
    <text evidence="1">The alpha subunit is responsible for the aldol cleavage of indoleglycerol phosphate to indole and glyceraldehyde 3-phosphate.</text>
</comment>
<comment type="catalytic activity">
    <reaction evidence="1">
        <text>(1S,2R)-1-C-(indol-3-yl)glycerol 3-phosphate + L-serine = D-glyceraldehyde 3-phosphate + L-tryptophan + H2O</text>
        <dbReference type="Rhea" id="RHEA:10532"/>
        <dbReference type="ChEBI" id="CHEBI:15377"/>
        <dbReference type="ChEBI" id="CHEBI:33384"/>
        <dbReference type="ChEBI" id="CHEBI:57912"/>
        <dbReference type="ChEBI" id="CHEBI:58866"/>
        <dbReference type="ChEBI" id="CHEBI:59776"/>
        <dbReference type="EC" id="4.2.1.20"/>
    </reaction>
</comment>
<comment type="pathway">
    <text evidence="1">Amino-acid biosynthesis; L-tryptophan biosynthesis; L-tryptophan from chorismate: step 5/5.</text>
</comment>
<comment type="subunit">
    <text evidence="1">Tetramer of two alpha and two beta chains.</text>
</comment>
<comment type="similarity">
    <text evidence="1">Belongs to the TrpA family.</text>
</comment>
<gene>
    <name evidence="1" type="primary">trpA</name>
    <name type="ordered locus">CA_C3157</name>
</gene>
<feature type="chain" id="PRO_0000098770" description="Tryptophan synthase alpha chain">
    <location>
        <begin position="1"/>
        <end position="263"/>
    </location>
</feature>
<feature type="active site" description="Proton acceptor" evidence="1">
    <location>
        <position position="50"/>
    </location>
</feature>
<feature type="active site" description="Proton acceptor" evidence="1">
    <location>
        <position position="61"/>
    </location>
</feature>
<evidence type="ECO:0000255" key="1">
    <source>
        <dbReference type="HAMAP-Rule" id="MF_00131"/>
    </source>
</evidence>
<keyword id="KW-0028">Amino-acid biosynthesis</keyword>
<keyword id="KW-0057">Aromatic amino acid biosynthesis</keyword>
<keyword id="KW-0456">Lyase</keyword>
<keyword id="KW-1185">Reference proteome</keyword>
<keyword id="KW-0822">Tryptophan biosynthesis</keyword>
<sequence>MANKIDLKFKELKYKNKKAMIPFVTSGYPDVETTKKIVIEMEKSGADLIELGIPYSDPVADGPIIQISSSGALNNGLKIKDIMNMVKEVRKNVKIPIVYMGYFGCVFKYGLEKFIKDSKESGVDGIVIPDLPLEERERVKEIADRYEFYIIPLVAPTSEDRIGKIVNGAKGFIYCVSTNGVTGVRNIIANDVKAYIDVVSKASNVPKCIGFGISSPEMAQKMKEYCDGVIIGSAVMKIVEEDIPKEEMIRKVGEFISQVNEVL</sequence>
<proteinExistence type="inferred from homology"/>
<reference key="1">
    <citation type="journal article" date="2001" name="J. Bacteriol.">
        <title>Genome sequence and comparative analysis of the solvent-producing bacterium Clostridium acetobutylicum.</title>
        <authorList>
            <person name="Noelling J."/>
            <person name="Breton G."/>
            <person name="Omelchenko M.V."/>
            <person name="Makarova K.S."/>
            <person name="Zeng Q."/>
            <person name="Gibson R."/>
            <person name="Lee H.M."/>
            <person name="Dubois J."/>
            <person name="Qiu D."/>
            <person name="Hitti J."/>
            <person name="Wolf Y.I."/>
            <person name="Tatusov R.L."/>
            <person name="Sabathe F."/>
            <person name="Doucette-Stamm L.A."/>
            <person name="Soucaille P."/>
            <person name="Daly M.J."/>
            <person name="Bennett G.N."/>
            <person name="Koonin E.V."/>
            <person name="Smith D.R."/>
        </authorList>
    </citation>
    <scope>NUCLEOTIDE SEQUENCE [LARGE SCALE GENOMIC DNA]</scope>
    <source>
        <strain>ATCC 824 / DSM 792 / JCM 1419 / IAM 19013 / LMG 5710 / NBRC 13948 / NRRL B-527 / VKM B-1787 / 2291 / W</strain>
    </source>
</reference>
<dbReference type="EC" id="4.2.1.20" evidence="1"/>
<dbReference type="EMBL" id="AE001437">
    <property type="protein sequence ID" value="AAK81094.1"/>
    <property type="molecule type" value="Genomic_DNA"/>
</dbReference>
<dbReference type="PIR" id="C97288">
    <property type="entry name" value="C97288"/>
</dbReference>
<dbReference type="RefSeq" id="NP_349754.1">
    <property type="nucleotide sequence ID" value="NC_003030.1"/>
</dbReference>
<dbReference type="RefSeq" id="WP_010966434.1">
    <property type="nucleotide sequence ID" value="NC_003030.1"/>
</dbReference>
<dbReference type="SMR" id="Q97EF6"/>
<dbReference type="STRING" id="272562.CA_C3157"/>
<dbReference type="GeneID" id="44999645"/>
<dbReference type="KEGG" id="cac:CA_C3157"/>
<dbReference type="PATRIC" id="fig|272562.8.peg.3338"/>
<dbReference type="eggNOG" id="COG0159">
    <property type="taxonomic scope" value="Bacteria"/>
</dbReference>
<dbReference type="HOGENOM" id="CLU_016734_0_0_9"/>
<dbReference type="OrthoDB" id="9804578at2"/>
<dbReference type="UniPathway" id="UPA00035">
    <property type="reaction ID" value="UER00044"/>
</dbReference>
<dbReference type="Proteomes" id="UP000000814">
    <property type="component" value="Chromosome"/>
</dbReference>
<dbReference type="GO" id="GO:0005829">
    <property type="term" value="C:cytosol"/>
    <property type="evidence" value="ECO:0007669"/>
    <property type="project" value="TreeGrafter"/>
</dbReference>
<dbReference type="GO" id="GO:0004834">
    <property type="term" value="F:tryptophan synthase activity"/>
    <property type="evidence" value="ECO:0007669"/>
    <property type="project" value="UniProtKB-UniRule"/>
</dbReference>
<dbReference type="CDD" id="cd04724">
    <property type="entry name" value="Tryptophan_synthase_alpha"/>
    <property type="match status" value="1"/>
</dbReference>
<dbReference type="FunFam" id="3.20.20.70:FF:000037">
    <property type="entry name" value="Tryptophan synthase alpha chain"/>
    <property type="match status" value="1"/>
</dbReference>
<dbReference type="Gene3D" id="3.20.20.70">
    <property type="entry name" value="Aldolase class I"/>
    <property type="match status" value="1"/>
</dbReference>
<dbReference type="HAMAP" id="MF_00131">
    <property type="entry name" value="Trp_synth_alpha"/>
    <property type="match status" value="1"/>
</dbReference>
<dbReference type="InterPro" id="IPR013785">
    <property type="entry name" value="Aldolase_TIM"/>
</dbReference>
<dbReference type="InterPro" id="IPR011060">
    <property type="entry name" value="RibuloseP-bd_barrel"/>
</dbReference>
<dbReference type="InterPro" id="IPR018204">
    <property type="entry name" value="Trp_synthase_alpha_AS"/>
</dbReference>
<dbReference type="InterPro" id="IPR002028">
    <property type="entry name" value="Trp_synthase_suA"/>
</dbReference>
<dbReference type="NCBIfam" id="TIGR00262">
    <property type="entry name" value="trpA"/>
    <property type="match status" value="1"/>
</dbReference>
<dbReference type="PANTHER" id="PTHR43406:SF1">
    <property type="entry name" value="TRYPTOPHAN SYNTHASE ALPHA CHAIN, CHLOROPLASTIC"/>
    <property type="match status" value="1"/>
</dbReference>
<dbReference type="PANTHER" id="PTHR43406">
    <property type="entry name" value="TRYPTOPHAN SYNTHASE, ALPHA CHAIN"/>
    <property type="match status" value="1"/>
</dbReference>
<dbReference type="Pfam" id="PF00290">
    <property type="entry name" value="Trp_syntA"/>
    <property type="match status" value="1"/>
</dbReference>
<dbReference type="SUPFAM" id="SSF51366">
    <property type="entry name" value="Ribulose-phoshate binding barrel"/>
    <property type="match status" value="1"/>
</dbReference>
<dbReference type="PROSITE" id="PS00167">
    <property type="entry name" value="TRP_SYNTHASE_ALPHA"/>
    <property type="match status" value="1"/>
</dbReference>
<accession>Q97EF6</accession>
<name>TRPA_CLOAB</name>
<protein>
    <recommendedName>
        <fullName evidence="1">Tryptophan synthase alpha chain</fullName>
        <ecNumber evidence="1">4.2.1.20</ecNumber>
    </recommendedName>
</protein>
<organism>
    <name type="scientific">Clostridium acetobutylicum (strain ATCC 824 / DSM 792 / JCM 1419 / IAM 19013 / LMG 5710 / NBRC 13948 / NRRL B-527 / VKM B-1787 / 2291 / W)</name>
    <dbReference type="NCBI Taxonomy" id="272562"/>
    <lineage>
        <taxon>Bacteria</taxon>
        <taxon>Bacillati</taxon>
        <taxon>Bacillota</taxon>
        <taxon>Clostridia</taxon>
        <taxon>Eubacteriales</taxon>
        <taxon>Clostridiaceae</taxon>
        <taxon>Clostridium</taxon>
    </lineage>
</organism>